<keyword id="KW-0474">Menaquinone biosynthesis</keyword>
<keyword id="KW-0489">Methyltransferase</keyword>
<keyword id="KW-0949">S-adenosyl-L-methionine</keyword>
<keyword id="KW-0808">Transferase</keyword>
<feature type="chain" id="PRO_0000193346" description="Demethylmenaquinone methyltransferase">
    <location>
        <begin position="1"/>
        <end position="239"/>
    </location>
</feature>
<feature type="binding site" evidence="1">
    <location>
        <position position="68"/>
    </location>
    <ligand>
        <name>S-adenosyl-L-methionine</name>
        <dbReference type="ChEBI" id="CHEBI:59789"/>
    </ligand>
</feature>
<feature type="binding site" evidence="1">
    <location>
        <position position="86"/>
    </location>
    <ligand>
        <name>S-adenosyl-L-methionine</name>
        <dbReference type="ChEBI" id="CHEBI:59789"/>
    </ligand>
</feature>
<feature type="binding site" evidence="1">
    <location>
        <begin position="111"/>
        <end position="112"/>
    </location>
    <ligand>
        <name>S-adenosyl-L-methionine</name>
        <dbReference type="ChEBI" id="CHEBI:59789"/>
    </ligand>
</feature>
<accession>P67065</accession>
<accession>Q820C2</accession>
<accession>Q83H13</accession>
<evidence type="ECO:0000255" key="1">
    <source>
        <dbReference type="HAMAP-Rule" id="MF_01813"/>
    </source>
</evidence>
<dbReference type="EC" id="2.1.1.163" evidence="1"/>
<dbReference type="EMBL" id="BX251410">
    <property type="protein sequence ID" value="CAD66750.1"/>
    <property type="molecule type" value="Genomic_DNA"/>
</dbReference>
<dbReference type="SMR" id="P67065"/>
<dbReference type="KEGG" id="tws:TW063"/>
<dbReference type="HOGENOM" id="CLU_037990_0_0_11"/>
<dbReference type="UniPathway" id="UPA00079">
    <property type="reaction ID" value="UER00169"/>
</dbReference>
<dbReference type="GO" id="GO:0043770">
    <property type="term" value="F:demethylmenaquinone methyltransferase activity"/>
    <property type="evidence" value="ECO:0007669"/>
    <property type="project" value="UniProtKB-UniRule"/>
</dbReference>
<dbReference type="GO" id="GO:0009234">
    <property type="term" value="P:menaquinone biosynthetic process"/>
    <property type="evidence" value="ECO:0007669"/>
    <property type="project" value="UniProtKB-UniRule"/>
</dbReference>
<dbReference type="GO" id="GO:0032259">
    <property type="term" value="P:methylation"/>
    <property type="evidence" value="ECO:0007669"/>
    <property type="project" value="UniProtKB-KW"/>
</dbReference>
<dbReference type="CDD" id="cd02440">
    <property type="entry name" value="AdoMet_MTases"/>
    <property type="match status" value="1"/>
</dbReference>
<dbReference type="Gene3D" id="3.40.50.150">
    <property type="entry name" value="Vaccinia Virus protein VP39"/>
    <property type="match status" value="1"/>
</dbReference>
<dbReference type="HAMAP" id="MF_01813">
    <property type="entry name" value="MenG_UbiE_methyltr"/>
    <property type="match status" value="1"/>
</dbReference>
<dbReference type="InterPro" id="IPR029063">
    <property type="entry name" value="SAM-dependent_MTases_sf"/>
</dbReference>
<dbReference type="InterPro" id="IPR004033">
    <property type="entry name" value="UbiE/COQ5_MeTrFase"/>
</dbReference>
<dbReference type="InterPro" id="IPR023576">
    <property type="entry name" value="UbiE/COQ5_MeTrFase_CS"/>
</dbReference>
<dbReference type="NCBIfam" id="TIGR01934">
    <property type="entry name" value="MenG_MenH_UbiE"/>
    <property type="match status" value="1"/>
</dbReference>
<dbReference type="PANTHER" id="PTHR43591:SF24">
    <property type="entry name" value="2-METHOXY-6-POLYPRENYL-1,4-BENZOQUINOL METHYLASE, MITOCHONDRIAL"/>
    <property type="match status" value="1"/>
</dbReference>
<dbReference type="PANTHER" id="PTHR43591">
    <property type="entry name" value="METHYLTRANSFERASE"/>
    <property type="match status" value="1"/>
</dbReference>
<dbReference type="Pfam" id="PF01209">
    <property type="entry name" value="Ubie_methyltran"/>
    <property type="match status" value="1"/>
</dbReference>
<dbReference type="SUPFAM" id="SSF53335">
    <property type="entry name" value="S-adenosyl-L-methionine-dependent methyltransferases"/>
    <property type="match status" value="1"/>
</dbReference>
<dbReference type="PROSITE" id="PS51608">
    <property type="entry name" value="SAM_MT_UBIE"/>
    <property type="match status" value="1"/>
</dbReference>
<dbReference type="PROSITE" id="PS01183">
    <property type="entry name" value="UBIE_1"/>
    <property type="match status" value="1"/>
</dbReference>
<dbReference type="PROSITE" id="PS01184">
    <property type="entry name" value="UBIE_2"/>
    <property type="match status" value="1"/>
</dbReference>
<name>MENG_TROW8</name>
<organism>
    <name type="scientific">Tropheryma whipplei (strain TW08/27)</name>
    <name type="common">Whipple's bacillus</name>
    <dbReference type="NCBI Taxonomy" id="218496"/>
    <lineage>
        <taxon>Bacteria</taxon>
        <taxon>Bacillati</taxon>
        <taxon>Actinomycetota</taxon>
        <taxon>Actinomycetes</taxon>
        <taxon>Micrococcales</taxon>
        <taxon>Tropherymataceae</taxon>
        <taxon>Tropheryma</taxon>
    </lineage>
</organism>
<gene>
    <name evidence="1" type="primary">menG</name>
    <name type="ordered locus">TW063</name>
</gene>
<reference key="1">
    <citation type="journal article" date="2003" name="Lancet">
        <title>Sequencing and analysis of the genome of the Whipple's disease bacterium Tropheryma whipplei.</title>
        <authorList>
            <person name="Bentley S.D."/>
            <person name="Maiwald M."/>
            <person name="Murphy L.D."/>
            <person name="Pallen M.J."/>
            <person name="Yeats C.A."/>
            <person name="Dover L.G."/>
            <person name="Norbertczak H.T."/>
            <person name="Besra G.S."/>
            <person name="Quail M.A."/>
            <person name="Harris D.E."/>
            <person name="von Herbay A."/>
            <person name="Goble A."/>
            <person name="Rutter S."/>
            <person name="Squares R."/>
            <person name="Squares S."/>
            <person name="Barrell B.G."/>
            <person name="Parkhill J."/>
            <person name="Relman D.A."/>
        </authorList>
    </citation>
    <scope>NUCLEOTIDE SEQUENCE [LARGE SCALE GENOMIC DNA]</scope>
    <source>
        <strain>TW08/27</strain>
    </source>
</reference>
<proteinExistence type="inferred from homology"/>
<protein>
    <recommendedName>
        <fullName evidence="1">Demethylmenaquinone methyltransferase</fullName>
        <ecNumber evidence="1">2.1.1.163</ecNumber>
    </recommendedName>
</protein>
<comment type="function">
    <text evidence="1">Methyltransferase required for the conversion of demethylmenaquinol (DMKH2) to menaquinol (MKH2).</text>
</comment>
<comment type="catalytic activity">
    <reaction evidence="1">
        <text>a 2-demethylmenaquinol + S-adenosyl-L-methionine = a menaquinol + S-adenosyl-L-homocysteine + H(+)</text>
        <dbReference type="Rhea" id="RHEA:42640"/>
        <dbReference type="Rhea" id="RHEA-COMP:9539"/>
        <dbReference type="Rhea" id="RHEA-COMP:9563"/>
        <dbReference type="ChEBI" id="CHEBI:15378"/>
        <dbReference type="ChEBI" id="CHEBI:18151"/>
        <dbReference type="ChEBI" id="CHEBI:55437"/>
        <dbReference type="ChEBI" id="CHEBI:57856"/>
        <dbReference type="ChEBI" id="CHEBI:59789"/>
        <dbReference type="EC" id="2.1.1.163"/>
    </reaction>
</comment>
<comment type="pathway">
    <text evidence="1">Quinol/quinone metabolism; menaquinone biosynthesis; menaquinol from 1,4-dihydroxy-2-naphthoate: step 2/2.</text>
</comment>
<comment type="similarity">
    <text evidence="1">Belongs to the class I-like SAM-binding methyltransferase superfamily. MenG/UbiE family.</text>
</comment>
<sequence length="239" mass="27045">MGTNIHIDMVIHGKHTAEIRKMFNRVAQAYDRTNLVLSFLQDAHWRRAACKMLGVTAGEEVLDVGAGTGASTRTVARTGAAVTGIDISPRMLQIARNRCKRFQNITWRLTNGDLPFPDKSFDAILMVFCLRNVSNIQGFLCDAARVLKPGGRLVVCEFSHPRRFVAPFYRLYLRYVLPRLAKLISSDPAAYEYLTESIEDWYEVDELAFMLEQCGFQNTSWKRLSFGAVALHRALRGPE</sequence>